<dbReference type="EC" id="6.1.1.21"/>
<dbReference type="EMBL" id="AJ248288">
    <property type="protein sequence ID" value="CAB50581.1"/>
    <property type="molecule type" value="Genomic_DNA"/>
</dbReference>
<dbReference type="EMBL" id="HE613800">
    <property type="protein sequence ID" value="CCE71145.1"/>
    <property type="molecule type" value="Genomic_DNA"/>
</dbReference>
<dbReference type="PIR" id="G75017">
    <property type="entry name" value="G75017"/>
</dbReference>
<dbReference type="RefSeq" id="WP_010868795.1">
    <property type="nucleotide sequence ID" value="NC_000868.1"/>
</dbReference>
<dbReference type="SMR" id="Q9UY31"/>
<dbReference type="STRING" id="272844.PAB1100"/>
<dbReference type="KEGG" id="pab:PAB1100"/>
<dbReference type="PATRIC" id="fig|272844.11.peg.1791"/>
<dbReference type="eggNOG" id="arCOG00404">
    <property type="taxonomic scope" value="Archaea"/>
</dbReference>
<dbReference type="HOGENOM" id="CLU_025113_3_0_2"/>
<dbReference type="OrthoDB" id="8659at2157"/>
<dbReference type="PhylomeDB" id="Q9UY31"/>
<dbReference type="Proteomes" id="UP000000810">
    <property type="component" value="Chromosome"/>
</dbReference>
<dbReference type="Proteomes" id="UP000009139">
    <property type="component" value="Chromosome"/>
</dbReference>
<dbReference type="GO" id="GO:0005737">
    <property type="term" value="C:cytoplasm"/>
    <property type="evidence" value="ECO:0007669"/>
    <property type="project" value="UniProtKB-SubCell"/>
</dbReference>
<dbReference type="GO" id="GO:0005524">
    <property type="term" value="F:ATP binding"/>
    <property type="evidence" value="ECO:0007669"/>
    <property type="project" value="UniProtKB-UniRule"/>
</dbReference>
<dbReference type="GO" id="GO:0004821">
    <property type="term" value="F:histidine-tRNA ligase activity"/>
    <property type="evidence" value="ECO:0007669"/>
    <property type="project" value="UniProtKB-UniRule"/>
</dbReference>
<dbReference type="GO" id="GO:0006427">
    <property type="term" value="P:histidyl-tRNA aminoacylation"/>
    <property type="evidence" value="ECO:0007669"/>
    <property type="project" value="UniProtKB-UniRule"/>
</dbReference>
<dbReference type="GO" id="GO:0000105">
    <property type="term" value="P:L-histidine biosynthetic process"/>
    <property type="evidence" value="ECO:0007669"/>
    <property type="project" value="InterPro"/>
</dbReference>
<dbReference type="CDD" id="cd00773">
    <property type="entry name" value="HisRS-like_core"/>
    <property type="match status" value="1"/>
</dbReference>
<dbReference type="CDD" id="cd00859">
    <property type="entry name" value="HisRS_anticodon"/>
    <property type="match status" value="1"/>
</dbReference>
<dbReference type="FunFam" id="3.30.930.10:FF:000054">
    <property type="entry name" value="Histidine--tRNA ligase chloroplastic/mitochondrial"/>
    <property type="match status" value="1"/>
</dbReference>
<dbReference type="Gene3D" id="3.40.50.800">
    <property type="entry name" value="Anticodon-binding domain"/>
    <property type="match status" value="1"/>
</dbReference>
<dbReference type="Gene3D" id="3.30.930.10">
    <property type="entry name" value="Bira Bifunctional Protein, Domain 2"/>
    <property type="match status" value="1"/>
</dbReference>
<dbReference type="HAMAP" id="MF_00127">
    <property type="entry name" value="His_tRNA_synth"/>
    <property type="match status" value="1"/>
</dbReference>
<dbReference type="HAMAP" id="MF_00125">
    <property type="entry name" value="HisZ"/>
    <property type="match status" value="1"/>
</dbReference>
<dbReference type="InterPro" id="IPR006195">
    <property type="entry name" value="aa-tRNA-synth_II"/>
</dbReference>
<dbReference type="InterPro" id="IPR045864">
    <property type="entry name" value="aa-tRNA-synth_II/BPL/LPL"/>
</dbReference>
<dbReference type="InterPro" id="IPR004154">
    <property type="entry name" value="Anticodon-bd"/>
</dbReference>
<dbReference type="InterPro" id="IPR036621">
    <property type="entry name" value="Anticodon-bd_dom_sf"/>
</dbReference>
<dbReference type="InterPro" id="IPR015807">
    <property type="entry name" value="His-tRNA-ligase"/>
</dbReference>
<dbReference type="InterPro" id="IPR041715">
    <property type="entry name" value="HisRS-like_core"/>
</dbReference>
<dbReference type="InterPro" id="IPR004516">
    <property type="entry name" value="HisRS/HisZ"/>
</dbReference>
<dbReference type="InterPro" id="IPR033656">
    <property type="entry name" value="HisRS_anticodon"/>
</dbReference>
<dbReference type="InterPro" id="IPR004517">
    <property type="entry name" value="HisZ"/>
</dbReference>
<dbReference type="NCBIfam" id="TIGR00442">
    <property type="entry name" value="hisS"/>
    <property type="match status" value="1"/>
</dbReference>
<dbReference type="NCBIfam" id="TIGR00443">
    <property type="entry name" value="hisZ_biosyn_reg"/>
    <property type="match status" value="1"/>
</dbReference>
<dbReference type="PANTHER" id="PTHR43707:SF1">
    <property type="entry name" value="HISTIDINE--TRNA LIGASE, MITOCHONDRIAL-RELATED"/>
    <property type="match status" value="1"/>
</dbReference>
<dbReference type="PANTHER" id="PTHR43707">
    <property type="entry name" value="HISTIDYL-TRNA SYNTHETASE"/>
    <property type="match status" value="1"/>
</dbReference>
<dbReference type="Pfam" id="PF03129">
    <property type="entry name" value="HGTP_anticodon"/>
    <property type="match status" value="1"/>
</dbReference>
<dbReference type="Pfam" id="PF13393">
    <property type="entry name" value="tRNA-synt_His"/>
    <property type="match status" value="1"/>
</dbReference>
<dbReference type="PIRSF" id="PIRSF001549">
    <property type="entry name" value="His-tRNA_synth"/>
    <property type="match status" value="1"/>
</dbReference>
<dbReference type="SUPFAM" id="SSF52954">
    <property type="entry name" value="Class II aaRS ABD-related"/>
    <property type="match status" value="1"/>
</dbReference>
<dbReference type="SUPFAM" id="SSF55681">
    <property type="entry name" value="Class II aaRS and biotin synthetases"/>
    <property type="match status" value="1"/>
</dbReference>
<dbReference type="PROSITE" id="PS50862">
    <property type="entry name" value="AA_TRNA_LIGASE_II"/>
    <property type="match status" value="1"/>
</dbReference>
<sequence length="431" mass="48877">MIERVKGTRDFLPEEMVKRRWVFEKIREVFETYGFKEVLTPVMEYTKLFQLRSGEEVVKQLYAFKDKGGRDVALRPDMTSSVARLYVNSFQTAPKPIKWYYIANMFRYEEPQSGRYREFWQAGVELIGSDKIEADAEVIALFVDSYLSTGLKDFTVNIGDRVLLDEFAKMLGVKDDIGLMRIIDKKDKLSQEEFLKALGEFGLDENGIEKVLNLIEIKGKPDDVLPLAEELFTSERAKEEISRLYNLVDILSWYEVDEWIQIDLGIARGFDYYTSIVFEAIVPNDLGIGSIGGGGRYDNLIEVFGGKPTPATGFAIGIERLIPILEWKGLLPELKAGPDVFVIPVGDSRDVATAIVTRLRKAGIRSDIELSGRKLRKALDYANRIGVRLSIIVGKRDLERGVVTIRDLESGNQVEVPVDNVVTKVRELLNQ</sequence>
<evidence type="ECO:0000250" key="1"/>
<evidence type="ECO:0000305" key="2"/>
<comment type="catalytic activity">
    <reaction>
        <text>tRNA(His) + L-histidine + ATP = L-histidyl-tRNA(His) + AMP + diphosphate + H(+)</text>
        <dbReference type="Rhea" id="RHEA:17313"/>
        <dbReference type="Rhea" id="RHEA-COMP:9665"/>
        <dbReference type="Rhea" id="RHEA-COMP:9689"/>
        <dbReference type="ChEBI" id="CHEBI:15378"/>
        <dbReference type="ChEBI" id="CHEBI:30616"/>
        <dbReference type="ChEBI" id="CHEBI:33019"/>
        <dbReference type="ChEBI" id="CHEBI:57595"/>
        <dbReference type="ChEBI" id="CHEBI:78442"/>
        <dbReference type="ChEBI" id="CHEBI:78527"/>
        <dbReference type="ChEBI" id="CHEBI:456215"/>
        <dbReference type="EC" id="6.1.1.21"/>
    </reaction>
</comment>
<comment type="subcellular location">
    <subcellularLocation>
        <location evidence="1">Cytoplasm</location>
    </subcellularLocation>
</comment>
<comment type="similarity">
    <text evidence="2">Belongs to the class-II aminoacyl-tRNA synthetase family.</text>
</comment>
<gene>
    <name type="primary">hisS</name>
    <name type="ordered locus">PYRAB16770</name>
    <name type="ORF">PAB1100</name>
</gene>
<accession>Q9UY31</accession>
<accession>G8ZK38</accession>
<keyword id="KW-0030">Aminoacyl-tRNA synthetase</keyword>
<keyword id="KW-0067">ATP-binding</keyword>
<keyword id="KW-0963">Cytoplasm</keyword>
<keyword id="KW-0436">Ligase</keyword>
<keyword id="KW-0547">Nucleotide-binding</keyword>
<keyword id="KW-0648">Protein biosynthesis</keyword>
<feature type="chain" id="PRO_0000136319" description="Histidine--tRNA ligase">
    <location>
        <begin position="1"/>
        <end position="431"/>
    </location>
</feature>
<name>SYH_PYRAB</name>
<protein>
    <recommendedName>
        <fullName>Histidine--tRNA ligase</fullName>
        <ecNumber>6.1.1.21</ecNumber>
    </recommendedName>
    <alternativeName>
        <fullName>Histidyl-tRNA synthetase</fullName>
        <shortName>HisRS</shortName>
    </alternativeName>
</protein>
<reference key="1">
    <citation type="journal article" date="2003" name="Mol. Microbiol.">
        <title>An integrated analysis of the genome of the hyperthermophilic archaeon Pyrococcus abyssi.</title>
        <authorList>
            <person name="Cohen G.N."/>
            <person name="Barbe V."/>
            <person name="Flament D."/>
            <person name="Galperin M."/>
            <person name="Heilig R."/>
            <person name="Lecompte O."/>
            <person name="Poch O."/>
            <person name="Prieur D."/>
            <person name="Querellou J."/>
            <person name="Ripp R."/>
            <person name="Thierry J.-C."/>
            <person name="Van der Oost J."/>
            <person name="Weissenbach J."/>
            <person name="Zivanovic Y."/>
            <person name="Forterre P."/>
        </authorList>
    </citation>
    <scope>NUCLEOTIDE SEQUENCE [LARGE SCALE GENOMIC DNA]</scope>
    <source>
        <strain>GE5 / Orsay</strain>
    </source>
</reference>
<reference key="2">
    <citation type="journal article" date="2012" name="Curr. Microbiol.">
        <title>Re-annotation of two hyperthermophilic archaea Pyrococcus abyssi GE5 and Pyrococcus furiosus DSM 3638.</title>
        <authorList>
            <person name="Gao J."/>
            <person name="Wang J."/>
        </authorList>
    </citation>
    <scope>GENOME REANNOTATION</scope>
    <source>
        <strain>GE5 / Orsay</strain>
    </source>
</reference>
<organism>
    <name type="scientific">Pyrococcus abyssi (strain GE5 / Orsay)</name>
    <dbReference type="NCBI Taxonomy" id="272844"/>
    <lineage>
        <taxon>Archaea</taxon>
        <taxon>Methanobacteriati</taxon>
        <taxon>Methanobacteriota</taxon>
        <taxon>Thermococci</taxon>
        <taxon>Thermococcales</taxon>
        <taxon>Thermococcaceae</taxon>
        <taxon>Pyrococcus</taxon>
    </lineage>
</organism>
<proteinExistence type="inferred from homology"/>